<name>ZSC21_PANPA</name>
<organism>
    <name type="scientific">Pan paniscus</name>
    <name type="common">Pygmy chimpanzee</name>
    <name type="synonym">Bonobo</name>
    <dbReference type="NCBI Taxonomy" id="9597"/>
    <lineage>
        <taxon>Eukaryota</taxon>
        <taxon>Metazoa</taxon>
        <taxon>Chordata</taxon>
        <taxon>Craniata</taxon>
        <taxon>Vertebrata</taxon>
        <taxon>Euteleostomi</taxon>
        <taxon>Mammalia</taxon>
        <taxon>Eutheria</taxon>
        <taxon>Euarchontoglires</taxon>
        <taxon>Primates</taxon>
        <taxon>Haplorrhini</taxon>
        <taxon>Catarrhini</taxon>
        <taxon>Hominidae</taxon>
        <taxon>Pan</taxon>
    </lineage>
</organism>
<sequence length="473" mass="53658">MMTKVLGMAPVLGPRPPQEQVGPLMVKVEEKEEKGKYLPSLEMFRQRFRQFGYHDTPGPREALSQLRVLCCEWLRPEIHTKEQILELLVLEQFLTILPQELQAWVQEHCPESAEEAVTLLEDLERELDEPGHQVSTPPNEQKPVWEKISSSGTAKESPSSMQPQPLETSHKYESWGPLYIQESGEEQEFAQDPRKVRDCRLSTQHEESADEQKGSEAEGLKGDIISVIIANKPEASLERQCVNLENEKGTKPPLQEAGSKKGRESVPTKPTPGERRYICAECGKAFSNSSNLTKHRRTHTGEKPYVCTKCGKAFSHSSNLTLHYRTHLVDRPYDCKCGKAFGQSSDLLKHQRMHTEEAPYQCKDCGKAFSGKGSLIRHYRIHTGEKPYQCNECGKSFSQHAGLSSHQRLHTGEKPYKCKECGKAFNHSSNFNKHHRIHTGEKPYWCHHCGKTFCSKSNLSKHQRVHTGEGEAP</sequence>
<keyword id="KW-0010">Activator</keyword>
<keyword id="KW-0221">Differentiation</keyword>
<keyword id="KW-0238">DNA-binding</keyword>
<keyword id="KW-1017">Isopeptide bond</keyword>
<keyword id="KW-0469">Meiosis</keyword>
<keyword id="KW-0479">Metal-binding</keyword>
<keyword id="KW-0539">Nucleus</keyword>
<keyword id="KW-1185">Reference proteome</keyword>
<keyword id="KW-0677">Repeat</keyword>
<keyword id="KW-0744">Spermatogenesis</keyword>
<keyword id="KW-0804">Transcription</keyword>
<keyword id="KW-0805">Transcription regulation</keyword>
<keyword id="KW-0832">Ubl conjugation</keyword>
<keyword id="KW-0862">Zinc</keyword>
<keyword id="KW-0863">Zinc-finger</keyword>
<dbReference type="EMBL" id="DQ977207">
    <property type="protein sequence ID" value="ABM54251.1"/>
    <property type="molecule type" value="Genomic_DNA"/>
</dbReference>
<dbReference type="RefSeq" id="XP_008967000.1">
    <property type="nucleotide sequence ID" value="XM_008968752.3"/>
</dbReference>
<dbReference type="RefSeq" id="XP_008967001.1">
    <property type="nucleotide sequence ID" value="XM_008968753.1"/>
</dbReference>
<dbReference type="RefSeq" id="XP_008967002.1">
    <property type="nucleotide sequence ID" value="XM_008968754.2"/>
</dbReference>
<dbReference type="RefSeq" id="XP_054971161.1">
    <property type="nucleotide sequence ID" value="XM_055115186.2"/>
</dbReference>
<dbReference type="RefSeq" id="XP_063462073.1">
    <property type="nucleotide sequence ID" value="XM_063606003.1"/>
</dbReference>
<dbReference type="RefSeq" id="XP_063462074.1">
    <property type="nucleotide sequence ID" value="XM_063606004.1"/>
</dbReference>
<dbReference type="SMR" id="A1YG26"/>
<dbReference type="STRING" id="9597.ENSPPAP00000007789"/>
<dbReference type="Ensembl" id="ENSPPAT00000030396.1">
    <property type="protein sequence ID" value="ENSPPAP00000007789.1"/>
    <property type="gene ID" value="ENSPPAG00000027118.1"/>
</dbReference>
<dbReference type="GeneID" id="103785590"/>
<dbReference type="KEGG" id="pps:103785590"/>
<dbReference type="CTD" id="7589"/>
<dbReference type="eggNOG" id="KOG1721">
    <property type="taxonomic scope" value="Eukaryota"/>
</dbReference>
<dbReference type="GeneTree" id="ENSGT00940000161607"/>
<dbReference type="OMA" id="WEPLYIQ"/>
<dbReference type="Proteomes" id="UP000240080">
    <property type="component" value="Chromosome 7"/>
</dbReference>
<dbReference type="Bgee" id="ENSPPAG00000027118">
    <property type="expression patterns" value="Expressed in testis and 6 other cell types or tissues"/>
</dbReference>
<dbReference type="GO" id="GO:0005634">
    <property type="term" value="C:nucleus"/>
    <property type="evidence" value="ECO:0007669"/>
    <property type="project" value="UniProtKB-SubCell"/>
</dbReference>
<dbReference type="GO" id="GO:0001228">
    <property type="term" value="F:DNA-binding transcription activator activity, RNA polymerase II-specific"/>
    <property type="evidence" value="ECO:0007669"/>
    <property type="project" value="Ensembl"/>
</dbReference>
<dbReference type="GO" id="GO:0000978">
    <property type="term" value="F:RNA polymerase II cis-regulatory region sequence-specific DNA binding"/>
    <property type="evidence" value="ECO:0007669"/>
    <property type="project" value="Ensembl"/>
</dbReference>
<dbReference type="GO" id="GO:0008270">
    <property type="term" value="F:zinc ion binding"/>
    <property type="evidence" value="ECO:0007669"/>
    <property type="project" value="UniProtKB-KW"/>
</dbReference>
<dbReference type="GO" id="GO:0030154">
    <property type="term" value="P:cell differentiation"/>
    <property type="evidence" value="ECO:0007669"/>
    <property type="project" value="UniProtKB-KW"/>
</dbReference>
<dbReference type="GO" id="GO:0007141">
    <property type="term" value="P:male meiosis I"/>
    <property type="evidence" value="ECO:0000250"/>
    <property type="project" value="UniProtKB"/>
</dbReference>
<dbReference type="GO" id="GO:0007283">
    <property type="term" value="P:spermatogenesis"/>
    <property type="evidence" value="ECO:0000250"/>
    <property type="project" value="UniProtKB"/>
</dbReference>
<dbReference type="CDD" id="cd07936">
    <property type="entry name" value="SCAN"/>
    <property type="match status" value="1"/>
</dbReference>
<dbReference type="FunFam" id="3.30.160.60:FF:000172">
    <property type="entry name" value="Zinc finger and SCAN domain containing 21"/>
    <property type="match status" value="2"/>
</dbReference>
<dbReference type="FunFam" id="3.30.160.60:FF:000151">
    <property type="entry name" value="Zinc finger and SCAN domain-containing 21"/>
    <property type="match status" value="1"/>
</dbReference>
<dbReference type="FunFam" id="3.30.160.60:FF:000467">
    <property type="entry name" value="Zinc finger and SCAN domain-containing 21"/>
    <property type="match status" value="1"/>
</dbReference>
<dbReference type="FunFam" id="3.30.160.60:FF:000955">
    <property type="entry name" value="Zinc finger and SCAN domain-containing protein 21"/>
    <property type="match status" value="1"/>
</dbReference>
<dbReference type="FunFam" id="3.30.160.60:FF:001047">
    <property type="entry name" value="Zinc finger and SCAN domain-containing protein 21"/>
    <property type="match status" value="1"/>
</dbReference>
<dbReference type="FunFam" id="1.10.4020.10:FF:000001">
    <property type="entry name" value="zinc finger protein 263 isoform X1"/>
    <property type="match status" value="1"/>
</dbReference>
<dbReference type="FunFam" id="3.30.160.60:FF:002343">
    <property type="entry name" value="Zinc finger protein 33A"/>
    <property type="match status" value="1"/>
</dbReference>
<dbReference type="Gene3D" id="3.30.160.60">
    <property type="entry name" value="Classic Zinc Finger"/>
    <property type="match status" value="7"/>
</dbReference>
<dbReference type="Gene3D" id="1.10.4020.10">
    <property type="entry name" value="DNA breaking-rejoining enzymes"/>
    <property type="match status" value="1"/>
</dbReference>
<dbReference type="InterPro" id="IPR003309">
    <property type="entry name" value="SCAN_dom"/>
</dbReference>
<dbReference type="InterPro" id="IPR038269">
    <property type="entry name" value="SCAN_sf"/>
</dbReference>
<dbReference type="InterPro" id="IPR036236">
    <property type="entry name" value="Znf_C2H2_sf"/>
</dbReference>
<dbReference type="InterPro" id="IPR013087">
    <property type="entry name" value="Znf_C2H2_type"/>
</dbReference>
<dbReference type="PANTHER" id="PTHR23226">
    <property type="entry name" value="ZINC FINGER AND SCAN DOMAIN-CONTAINING"/>
    <property type="match status" value="1"/>
</dbReference>
<dbReference type="PANTHER" id="PTHR23226:SF366">
    <property type="entry name" value="ZINC FINGER PROTEIN ZFP2"/>
    <property type="match status" value="1"/>
</dbReference>
<dbReference type="Pfam" id="PF02023">
    <property type="entry name" value="SCAN"/>
    <property type="match status" value="1"/>
</dbReference>
<dbReference type="Pfam" id="PF00096">
    <property type="entry name" value="zf-C2H2"/>
    <property type="match status" value="5"/>
</dbReference>
<dbReference type="Pfam" id="PF13465">
    <property type="entry name" value="zf-H2C2_2"/>
    <property type="match status" value="1"/>
</dbReference>
<dbReference type="SMART" id="SM00431">
    <property type="entry name" value="SCAN"/>
    <property type="match status" value="1"/>
</dbReference>
<dbReference type="SMART" id="SM00355">
    <property type="entry name" value="ZnF_C2H2"/>
    <property type="match status" value="7"/>
</dbReference>
<dbReference type="SUPFAM" id="SSF57667">
    <property type="entry name" value="beta-beta-alpha zinc fingers"/>
    <property type="match status" value="4"/>
</dbReference>
<dbReference type="SUPFAM" id="SSF47353">
    <property type="entry name" value="Retrovirus capsid dimerization domain-like"/>
    <property type="match status" value="1"/>
</dbReference>
<dbReference type="PROSITE" id="PS50804">
    <property type="entry name" value="SCAN_BOX"/>
    <property type="match status" value="1"/>
</dbReference>
<dbReference type="PROSITE" id="PS00028">
    <property type="entry name" value="ZINC_FINGER_C2H2_1"/>
    <property type="match status" value="6"/>
</dbReference>
<dbReference type="PROSITE" id="PS50157">
    <property type="entry name" value="ZINC_FINGER_C2H2_2"/>
    <property type="match status" value="7"/>
</dbReference>
<protein>
    <recommendedName>
        <fullName>Zinc finger and SCAN domain-containing protein 21</fullName>
    </recommendedName>
</protein>
<feature type="chain" id="PRO_0000285488" description="Zinc finger and SCAN domain-containing protein 21">
    <location>
        <begin position="1"/>
        <end position="473"/>
    </location>
</feature>
<feature type="domain" description="SCAN box" evidence="4">
    <location>
        <begin position="45"/>
        <end position="127"/>
    </location>
</feature>
<feature type="zinc finger region" description="C2H2-type 1" evidence="3">
    <location>
        <begin position="277"/>
        <end position="299"/>
    </location>
</feature>
<feature type="zinc finger region" description="C2H2-type 2" evidence="3">
    <location>
        <begin position="305"/>
        <end position="327"/>
    </location>
</feature>
<feature type="zinc finger region" description="C2H2-type 3" evidence="3">
    <location>
        <begin position="333"/>
        <end position="354"/>
    </location>
</feature>
<feature type="zinc finger region" description="C2H2-type 4" evidence="3">
    <location>
        <begin position="360"/>
        <end position="382"/>
    </location>
</feature>
<feature type="zinc finger region" description="C2H2-type 5" evidence="3">
    <location>
        <begin position="388"/>
        <end position="410"/>
    </location>
</feature>
<feature type="zinc finger region" description="C2H2-type 6" evidence="3">
    <location>
        <begin position="416"/>
        <end position="438"/>
    </location>
</feature>
<feature type="zinc finger region" description="C2H2-type 7" evidence="3">
    <location>
        <begin position="444"/>
        <end position="466"/>
    </location>
</feature>
<feature type="region of interest" description="Disordered" evidence="5">
    <location>
        <begin position="127"/>
        <end position="169"/>
    </location>
</feature>
<feature type="region of interest" description="Disordered" evidence="5">
    <location>
        <begin position="244"/>
        <end position="272"/>
    </location>
</feature>
<feature type="compositionally biased region" description="Polar residues" evidence="5">
    <location>
        <begin position="148"/>
        <end position="167"/>
    </location>
</feature>
<feature type="compositionally biased region" description="Basic and acidic residues" evidence="5">
    <location>
        <begin position="258"/>
        <end position="272"/>
    </location>
</feature>
<feature type="cross-link" description="Glycyl lysine isopeptide (Lys-Gly) (interchain with G-Cter in SUMO2)" evidence="2">
    <location>
        <position position="27"/>
    </location>
</feature>
<feature type="cross-link" description="Glycyl lysine isopeptide (Lys-Gly) (interchain with G-Cter in SUMO2)" evidence="2">
    <location>
        <position position="221"/>
    </location>
</feature>
<feature type="cross-link" description="Glycyl lysine isopeptide (Lys-Gly) (interchain with G-Cter in SUMO2)" evidence="2">
    <location>
        <position position="232"/>
    </location>
</feature>
<feature type="cross-link" description="Glycyl lysine isopeptide (Lys-Gly) (interchain with G-Cter in SUMO2)" evidence="2">
    <location>
        <position position="349"/>
    </location>
</feature>
<proteinExistence type="inferred from homology"/>
<comment type="function">
    <text evidence="1">Strong transcriptional activator (By similarity). Plays an important role in spermatogenesis; essential for the progression of meiotic prophase I in spermatocytes (By similarity).</text>
</comment>
<comment type="subcellular location">
    <subcellularLocation>
        <location evidence="4">Nucleus</location>
    </subcellularLocation>
</comment>
<comment type="similarity">
    <text evidence="6">Belongs to the krueppel C2H2-type zinc-finger protein family.</text>
</comment>
<accession>A1YG26</accession>
<evidence type="ECO:0000250" key="1">
    <source>
        <dbReference type="UniProtKB" id="Q07231"/>
    </source>
</evidence>
<evidence type="ECO:0000250" key="2">
    <source>
        <dbReference type="UniProtKB" id="Q9Y5A6"/>
    </source>
</evidence>
<evidence type="ECO:0000255" key="3">
    <source>
        <dbReference type="PROSITE-ProRule" id="PRU00042"/>
    </source>
</evidence>
<evidence type="ECO:0000255" key="4">
    <source>
        <dbReference type="PROSITE-ProRule" id="PRU00187"/>
    </source>
</evidence>
<evidence type="ECO:0000256" key="5">
    <source>
        <dbReference type="SAM" id="MobiDB-lite"/>
    </source>
</evidence>
<evidence type="ECO:0000305" key="6"/>
<gene>
    <name type="primary">ZSCAN21</name>
</gene>
<reference key="1">
    <citation type="submission" date="2006-08" db="EMBL/GenBank/DDBJ databases">
        <title>Positive selection in transcription factor genes on the human lineage.</title>
        <authorList>
            <person name="Nickel G.C."/>
            <person name="Tefft D.L."/>
            <person name="Trevarthen K."/>
            <person name="Funt J."/>
            <person name="Adams M.D."/>
        </authorList>
    </citation>
    <scope>NUCLEOTIDE SEQUENCE [GENOMIC DNA]</scope>
</reference>